<feature type="chain" id="PRO_1000046557" description="RNA chaperone ProQ">
    <location>
        <begin position="1"/>
        <end position="225"/>
    </location>
</feature>
<feature type="region of interest" description="Disordered" evidence="2">
    <location>
        <begin position="107"/>
        <end position="169"/>
    </location>
</feature>
<feature type="compositionally biased region" description="Low complexity" evidence="2">
    <location>
        <begin position="109"/>
        <end position="118"/>
    </location>
</feature>
<feature type="compositionally biased region" description="Basic residues" evidence="2">
    <location>
        <begin position="137"/>
        <end position="146"/>
    </location>
</feature>
<feature type="compositionally biased region" description="Basic and acidic residues" evidence="2">
    <location>
        <begin position="147"/>
        <end position="156"/>
    </location>
</feature>
<evidence type="ECO:0000255" key="1">
    <source>
        <dbReference type="HAMAP-Rule" id="MF_00749"/>
    </source>
</evidence>
<evidence type="ECO:0000256" key="2">
    <source>
        <dbReference type="SAM" id="MobiDB-lite"/>
    </source>
</evidence>
<organism>
    <name type="scientific">Klebsiella pneumoniae subsp. pneumoniae (strain ATCC 700721 / MGH 78578)</name>
    <dbReference type="NCBI Taxonomy" id="272620"/>
    <lineage>
        <taxon>Bacteria</taxon>
        <taxon>Pseudomonadati</taxon>
        <taxon>Pseudomonadota</taxon>
        <taxon>Gammaproteobacteria</taxon>
        <taxon>Enterobacterales</taxon>
        <taxon>Enterobacteriaceae</taxon>
        <taxon>Klebsiella/Raoultella group</taxon>
        <taxon>Klebsiella</taxon>
        <taxon>Klebsiella pneumoniae complex</taxon>
    </lineage>
</organism>
<sequence>MENQPKLNSSKEVIAFLAERFPQCFSAEGEARPLKIGIFQDLVERVGGEMNLSKTQLRAALRLYTSSWRYLYGVKAGAIRVDLDGNPCGELEEQHIAHARQQLEEAKARVQAQRAAQQAKKREAAAAAGQQDEGVRRERKPRPQQPRRKEGAEQRKPRPVAAKAPREERLTPVSDVSVLTVGQALKVKAGNNAMDATVLEITKDGVRVQLTSGMSMIVRAEHLVF</sequence>
<protein>
    <recommendedName>
        <fullName evidence="1">RNA chaperone ProQ</fullName>
    </recommendedName>
</protein>
<gene>
    <name evidence="1" type="primary">proQ</name>
    <name type="ordered locus">KPN78578_23120</name>
    <name type="ORF">KPN_02347</name>
</gene>
<name>PROQ_KLEP7</name>
<keyword id="KW-0143">Chaperone</keyword>
<keyword id="KW-0963">Cytoplasm</keyword>
<keyword id="KW-0694">RNA-binding</keyword>
<comment type="function">
    <text evidence="1">RNA chaperone with significant RNA binding, RNA strand exchange and RNA duplexing activities. May regulate ProP activity through an RNA-based, post-transcriptional mechanism.</text>
</comment>
<comment type="subcellular location">
    <subcellularLocation>
        <location evidence="1">Cytoplasm</location>
    </subcellularLocation>
</comment>
<comment type="similarity">
    <text evidence="1">Belongs to the ProQ family.</text>
</comment>
<reference key="1">
    <citation type="submission" date="2006-09" db="EMBL/GenBank/DDBJ databases">
        <authorList>
            <consortium name="The Klebsiella pneumonia Genome Sequencing Project"/>
            <person name="McClelland M."/>
            <person name="Sanderson E.K."/>
            <person name="Spieth J."/>
            <person name="Clifton W.S."/>
            <person name="Latreille P."/>
            <person name="Sabo A."/>
            <person name="Pepin K."/>
            <person name="Bhonagiri V."/>
            <person name="Porwollik S."/>
            <person name="Ali J."/>
            <person name="Wilson R.K."/>
        </authorList>
    </citation>
    <scope>NUCLEOTIDE SEQUENCE [LARGE SCALE GENOMIC DNA]</scope>
    <source>
        <strain>ATCC 700721 / MGH 78578</strain>
    </source>
</reference>
<proteinExistence type="inferred from homology"/>
<accession>A6TB02</accession>
<dbReference type="EMBL" id="CP000647">
    <property type="protein sequence ID" value="ABR77773.1"/>
    <property type="molecule type" value="Genomic_DNA"/>
</dbReference>
<dbReference type="RefSeq" id="WP_002911385.1">
    <property type="nucleotide sequence ID" value="NC_009648.1"/>
</dbReference>
<dbReference type="SMR" id="A6TB02"/>
<dbReference type="STRING" id="272620.KPN_02347"/>
<dbReference type="jPOST" id="A6TB02"/>
<dbReference type="PaxDb" id="272620-KPN_02347"/>
<dbReference type="EnsemblBacteria" id="ABR77773">
    <property type="protein sequence ID" value="ABR77773"/>
    <property type="gene ID" value="KPN_02347"/>
</dbReference>
<dbReference type="KEGG" id="kpn:KPN_02347"/>
<dbReference type="HOGENOM" id="CLU_113254_0_0_6"/>
<dbReference type="Proteomes" id="UP000000265">
    <property type="component" value="Chromosome"/>
</dbReference>
<dbReference type="GO" id="GO:0005829">
    <property type="term" value="C:cytosol"/>
    <property type="evidence" value="ECO:0007669"/>
    <property type="project" value="TreeGrafter"/>
</dbReference>
<dbReference type="GO" id="GO:0033592">
    <property type="term" value="F:RNA strand annealing activity"/>
    <property type="evidence" value="ECO:0007669"/>
    <property type="project" value="UniProtKB-UniRule"/>
</dbReference>
<dbReference type="GO" id="GO:0034057">
    <property type="term" value="F:RNA strand-exchange activity"/>
    <property type="evidence" value="ECO:0007669"/>
    <property type="project" value="UniProtKB-UniRule"/>
</dbReference>
<dbReference type="GO" id="GO:0010608">
    <property type="term" value="P:post-transcriptional regulation of gene expression"/>
    <property type="evidence" value="ECO:0007669"/>
    <property type="project" value="InterPro"/>
</dbReference>
<dbReference type="FunFam" id="1.10.1710.10:FF:000001">
    <property type="entry name" value="RNA chaperone ProQ"/>
    <property type="match status" value="1"/>
</dbReference>
<dbReference type="Gene3D" id="1.10.1710.10">
    <property type="entry name" value="ProQ/FinO domain"/>
    <property type="match status" value="1"/>
</dbReference>
<dbReference type="HAMAP" id="MF_00749">
    <property type="entry name" value="ProQ"/>
    <property type="match status" value="1"/>
</dbReference>
<dbReference type="InterPro" id="IPR023529">
    <property type="entry name" value="ProQ"/>
</dbReference>
<dbReference type="InterPro" id="IPR016103">
    <property type="entry name" value="ProQ/FinO"/>
</dbReference>
<dbReference type="InterPro" id="IPR036442">
    <property type="entry name" value="ProQ/FinO_sf"/>
</dbReference>
<dbReference type="InterPro" id="IPR035236">
    <property type="entry name" value="ProQ_C"/>
</dbReference>
<dbReference type="NCBIfam" id="NF003434">
    <property type="entry name" value="PRK04950.1"/>
    <property type="match status" value="1"/>
</dbReference>
<dbReference type="PANTHER" id="PTHR38106">
    <property type="entry name" value="RNA CHAPERONE PROQ"/>
    <property type="match status" value="1"/>
</dbReference>
<dbReference type="PANTHER" id="PTHR38106:SF1">
    <property type="entry name" value="RNA CHAPERONE PROQ"/>
    <property type="match status" value="1"/>
</dbReference>
<dbReference type="Pfam" id="PF04352">
    <property type="entry name" value="ProQ"/>
    <property type="match status" value="1"/>
</dbReference>
<dbReference type="Pfam" id="PF17516">
    <property type="entry name" value="ProQ_C"/>
    <property type="match status" value="1"/>
</dbReference>
<dbReference type="SMART" id="SM00945">
    <property type="entry name" value="ProQ"/>
    <property type="match status" value="1"/>
</dbReference>
<dbReference type="SUPFAM" id="SSF48657">
    <property type="entry name" value="FinO-like"/>
    <property type="match status" value="1"/>
</dbReference>